<gene>
    <name evidence="1" type="primary">yggX</name>
    <name type="ordered locus">SFV_3020</name>
</gene>
<reference key="1">
    <citation type="journal article" date="2006" name="BMC Genomics">
        <title>Complete genome sequence of Shigella flexneri 5b and comparison with Shigella flexneri 2a.</title>
        <authorList>
            <person name="Nie H."/>
            <person name="Yang F."/>
            <person name="Zhang X."/>
            <person name="Yang J."/>
            <person name="Chen L."/>
            <person name="Wang J."/>
            <person name="Xiong Z."/>
            <person name="Peng J."/>
            <person name="Sun L."/>
            <person name="Dong J."/>
            <person name="Xue Y."/>
            <person name="Xu X."/>
            <person name="Chen S."/>
            <person name="Yao Z."/>
            <person name="Shen Y."/>
            <person name="Jin Q."/>
        </authorList>
    </citation>
    <scope>NUCLEOTIDE SEQUENCE [LARGE SCALE GENOMIC DNA]</scope>
    <source>
        <strain>8401</strain>
    </source>
</reference>
<dbReference type="EMBL" id="CP000266">
    <property type="protein sequence ID" value="ABF05089.1"/>
    <property type="molecule type" value="Genomic_DNA"/>
</dbReference>
<dbReference type="RefSeq" id="WP_000091700.1">
    <property type="nucleotide sequence ID" value="NC_008258.1"/>
</dbReference>
<dbReference type="SMR" id="Q0T0S5"/>
<dbReference type="KEGG" id="sfv:SFV_3020"/>
<dbReference type="HOGENOM" id="CLU_170994_0_0_6"/>
<dbReference type="Proteomes" id="UP000000659">
    <property type="component" value="Chromosome"/>
</dbReference>
<dbReference type="GO" id="GO:0005829">
    <property type="term" value="C:cytosol"/>
    <property type="evidence" value="ECO:0007669"/>
    <property type="project" value="TreeGrafter"/>
</dbReference>
<dbReference type="GO" id="GO:0005506">
    <property type="term" value="F:iron ion binding"/>
    <property type="evidence" value="ECO:0007669"/>
    <property type="project" value="UniProtKB-UniRule"/>
</dbReference>
<dbReference type="GO" id="GO:0034599">
    <property type="term" value="P:cellular response to oxidative stress"/>
    <property type="evidence" value="ECO:0007669"/>
    <property type="project" value="TreeGrafter"/>
</dbReference>
<dbReference type="FunFam" id="1.10.3880.10:FF:000001">
    <property type="entry name" value="Probable Fe(2+)-trafficking protein"/>
    <property type="match status" value="1"/>
</dbReference>
<dbReference type="Gene3D" id="1.10.3880.10">
    <property type="entry name" value="Fe(II) trafficking protein YggX"/>
    <property type="match status" value="1"/>
</dbReference>
<dbReference type="HAMAP" id="MF_00686">
    <property type="entry name" value="Fe_traffic_YggX"/>
    <property type="match status" value="1"/>
</dbReference>
<dbReference type="InterPro" id="IPR007457">
    <property type="entry name" value="Fe_traffick_prot_YggX"/>
</dbReference>
<dbReference type="InterPro" id="IPR036766">
    <property type="entry name" value="Fe_traffick_prot_YggX_sf"/>
</dbReference>
<dbReference type="NCBIfam" id="NF003817">
    <property type="entry name" value="PRK05408.1"/>
    <property type="match status" value="1"/>
</dbReference>
<dbReference type="PANTHER" id="PTHR36965">
    <property type="entry name" value="FE(2+)-TRAFFICKING PROTEIN-RELATED"/>
    <property type="match status" value="1"/>
</dbReference>
<dbReference type="PANTHER" id="PTHR36965:SF1">
    <property type="entry name" value="FE(2+)-TRAFFICKING PROTEIN-RELATED"/>
    <property type="match status" value="1"/>
</dbReference>
<dbReference type="Pfam" id="PF04362">
    <property type="entry name" value="Iron_traffic"/>
    <property type="match status" value="1"/>
</dbReference>
<dbReference type="PIRSF" id="PIRSF029827">
    <property type="entry name" value="Fe_traffic_YggX"/>
    <property type="match status" value="1"/>
</dbReference>
<dbReference type="SUPFAM" id="SSF111148">
    <property type="entry name" value="YggX-like"/>
    <property type="match status" value="1"/>
</dbReference>
<proteinExistence type="inferred from homology"/>
<name>FETP_SHIF8</name>
<protein>
    <recommendedName>
        <fullName evidence="1">Probable Fe(2+)-trafficking protein</fullName>
    </recommendedName>
</protein>
<accession>Q0T0S5</accession>
<comment type="function">
    <text evidence="1">Could be a mediator in iron transactions between iron acquisition and iron-requiring processes, such as synthesis and/or repair of Fe-S clusters in biosynthetic enzymes.</text>
</comment>
<comment type="subunit">
    <text evidence="1">Monomer.</text>
</comment>
<comment type="similarity">
    <text evidence="1">Belongs to the Fe(2+)-trafficking protein family.</text>
</comment>
<organism>
    <name type="scientific">Shigella flexneri serotype 5b (strain 8401)</name>
    <dbReference type="NCBI Taxonomy" id="373384"/>
    <lineage>
        <taxon>Bacteria</taxon>
        <taxon>Pseudomonadati</taxon>
        <taxon>Pseudomonadota</taxon>
        <taxon>Gammaproteobacteria</taxon>
        <taxon>Enterobacterales</taxon>
        <taxon>Enterobacteriaceae</taxon>
        <taxon>Shigella</taxon>
    </lineage>
</organism>
<feature type="chain" id="PRO_1000045071" description="Probable Fe(2+)-trafficking protein">
    <location>
        <begin position="1"/>
        <end position="91"/>
    </location>
</feature>
<keyword id="KW-0408">Iron</keyword>
<evidence type="ECO:0000255" key="1">
    <source>
        <dbReference type="HAMAP-Rule" id="MF_00686"/>
    </source>
</evidence>
<sequence length="91" mass="10953">MSRTIFCTFLQREAEGQDFQLYPGELGKRIYNEISKEAWAQWQHKQTMLINEKKLNMMNAEHRKLLEQEMVNFLFEGKEVHIEGYTPEDKK</sequence>